<dbReference type="EMBL" id="CP000903">
    <property type="protein sequence ID" value="ABY41363.1"/>
    <property type="molecule type" value="Genomic_DNA"/>
</dbReference>
<dbReference type="RefSeq" id="WP_002009790.1">
    <property type="nucleotide sequence ID" value="NZ_CAKMRX030000129.1"/>
</dbReference>
<dbReference type="SMR" id="A9VNB2"/>
<dbReference type="GeneID" id="66264832"/>
<dbReference type="KEGG" id="bwe:BcerKBAB4_0094"/>
<dbReference type="eggNOG" id="COG0244">
    <property type="taxonomic scope" value="Bacteria"/>
</dbReference>
<dbReference type="HOGENOM" id="CLU_092227_2_0_9"/>
<dbReference type="Proteomes" id="UP000002154">
    <property type="component" value="Chromosome"/>
</dbReference>
<dbReference type="GO" id="GO:0015934">
    <property type="term" value="C:large ribosomal subunit"/>
    <property type="evidence" value="ECO:0007669"/>
    <property type="project" value="InterPro"/>
</dbReference>
<dbReference type="GO" id="GO:0070180">
    <property type="term" value="F:large ribosomal subunit rRNA binding"/>
    <property type="evidence" value="ECO:0007669"/>
    <property type="project" value="UniProtKB-UniRule"/>
</dbReference>
<dbReference type="GO" id="GO:0003735">
    <property type="term" value="F:structural constituent of ribosome"/>
    <property type="evidence" value="ECO:0007669"/>
    <property type="project" value="InterPro"/>
</dbReference>
<dbReference type="GO" id="GO:0006412">
    <property type="term" value="P:translation"/>
    <property type="evidence" value="ECO:0007669"/>
    <property type="project" value="UniProtKB-UniRule"/>
</dbReference>
<dbReference type="CDD" id="cd05797">
    <property type="entry name" value="Ribosomal_L10"/>
    <property type="match status" value="1"/>
</dbReference>
<dbReference type="FunFam" id="3.30.70.1730:FF:000001">
    <property type="entry name" value="50S ribosomal protein L10"/>
    <property type="match status" value="1"/>
</dbReference>
<dbReference type="Gene3D" id="3.30.70.1730">
    <property type="match status" value="1"/>
</dbReference>
<dbReference type="Gene3D" id="6.10.250.290">
    <property type="match status" value="1"/>
</dbReference>
<dbReference type="HAMAP" id="MF_00362">
    <property type="entry name" value="Ribosomal_uL10"/>
    <property type="match status" value="1"/>
</dbReference>
<dbReference type="InterPro" id="IPR001790">
    <property type="entry name" value="Ribosomal_uL10"/>
</dbReference>
<dbReference type="InterPro" id="IPR043141">
    <property type="entry name" value="Ribosomal_uL10-like_sf"/>
</dbReference>
<dbReference type="InterPro" id="IPR022973">
    <property type="entry name" value="Ribosomal_uL10_bac"/>
</dbReference>
<dbReference type="InterPro" id="IPR047865">
    <property type="entry name" value="Ribosomal_uL10_bac_type"/>
</dbReference>
<dbReference type="InterPro" id="IPR002363">
    <property type="entry name" value="Ribosomal_uL10_CS_bac"/>
</dbReference>
<dbReference type="NCBIfam" id="NF000955">
    <property type="entry name" value="PRK00099.1-1"/>
    <property type="match status" value="1"/>
</dbReference>
<dbReference type="PANTHER" id="PTHR11560">
    <property type="entry name" value="39S RIBOSOMAL PROTEIN L10, MITOCHONDRIAL"/>
    <property type="match status" value="1"/>
</dbReference>
<dbReference type="Pfam" id="PF00466">
    <property type="entry name" value="Ribosomal_L10"/>
    <property type="match status" value="1"/>
</dbReference>
<dbReference type="SUPFAM" id="SSF160369">
    <property type="entry name" value="Ribosomal protein L10-like"/>
    <property type="match status" value="1"/>
</dbReference>
<dbReference type="PROSITE" id="PS01109">
    <property type="entry name" value="RIBOSOMAL_L10"/>
    <property type="match status" value="1"/>
</dbReference>
<accession>A9VNB2</accession>
<feature type="chain" id="PRO_1000120917" description="Large ribosomal subunit protein uL10">
    <location>
        <begin position="1"/>
        <end position="166"/>
    </location>
</feature>
<organism>
    <name type="scientific">Bacillus mycoides (strain KBAB4)</name>
    <name type="common">Bacillus weihenstephanensis</name>
    <dbReference type="NCBI Taxonomy" id="315730"/>
    <lineage>
        <taxon>Bacteria</taxon>
        <taxon>Bacillati</taxon>
        <taxon>Bacillota</taxon>
        <taxon>Bacilli</taxon>
        <taxon>Bacillales</taxon>
        <taxon>Bacillaceae</taxon>
        <taxon>Bacillus</taxon>
        <taxon>Bacillus cereus group</taxon>
    </lineage>
</organism>
<name>RL10_BACMK</name>
<sequence>MSKVIETKQQVVTEIAEKLRASKSTIVVDYRGLTVSEATELRKNLREAGVEFKVYKNSLTRRAAESAEMAELNEFLTGPNAIAFSNEDVVAPAKVLNDFAKNHEALEIKAGVIEGKLVTLDEVKAIATLPSREGLLSMLLSVLQAPIRNLALATKAVADQKEEQGA</sequence>
<reference key="1">
    <citation type="journal article" date="2008" name="Chem. Biol. Interact.">
        <title>Extending the Bacillus cereus group genomics to putative food-borne pathogens of different toxicity.</title>
        <authorList>
            <person name="Lapidus A."/>
            <person name="Goltsman E."/>
            <person name="Auger S."/>
            <person name="Galleron N."/>
            <person name="Segurens B."/>
            <person name="Dossat C."/>
            <person name="Land M.L."/>
            <person name="Broussolle V."/>
            <person name="Brillard J."/>
            <person name="Guinebretiere M.-H."/>
            <person name="Sanchis V."/>
            <person name="Nguen-the C."/>
            <person name="Lereclus D."/>
            <person name="Richardson P."/>
            <person name="Wincker P."/>
            <person name="Weissenbach J."/>
            <person name="Ehrlich S.D."/>
            <person name="Sorokin A."/>
        </authorList>
    </citation>
    <scope>NUCLEOTIDE SEQUENCE [LARGE SCALE GENOMIC DNA]</scope>
    <source>
        <strain>KBAB4</strain>
    </source>
</reference>
<protein>
    <recommendedName>
        <fullName evidence="1">Large ribosomal subunit protein uL10</fullName>
    </recommendedName>
    <alternativeName>
        <fullName evidence="2">50S ribosomal protein L10</fullName>
    </alternativeName>
</protein>
<comment type="function">
    <text evidence="1">Forms part of the ribosomal stalk, playing a central role in the interaction of the ribosome with GTP-bound translation factors.</text>
</comment>
<comment type="subunit">
    <text evidence="1">Part of the ribosomal stalk of the 50S ribosomal subunit. The N-terminus interacts with L11 and the large rRNA to form the base of the stalk. The C-terminus forms an elongated spine to which L12 dimers bind in a sequential fashion forming a multimeric L10(L12)X complex.</text>
</comment>
<comment type="similarity">
    <text evidence="1">Belongs to the universal ribosomal protein uL10 family.</text>
</comment>
<keyword id="KW-0687">Ribonucleoprotein</keyword>
<keyword id="KW-0689">Ribosomal protein</keyword>
<keyword id="KW-0694">RNA-binding</keyword>
<keyword id="KW-0699">rRNA-binding</keyword>
<proteinExistence type="inferred from homology"/>
<gene>
    <name evidence="1" type="primary">rplJ</name>
    <name type="ordered locus">BcerKBAB4_0094</name>
</gene>
<evidence type="ECO:0000255" key="1">
    <source>
        <dbReference type="HAMAP-Rule" id="MF_00362"/>
    </source>
</evidence>
<evidence type="ECO:0000305" key="2"/>